<dbReference type="EMBL" id="AE014291">
    <property type="protein sequence ID" value="AAN30274.1"/>
    <property type="molecule type" value="Genomic_DNA"/>
</dbReference>
<dbReference type="EMBL" id="CP002997">
    <property type="protein sequence ID" value="AEM18691.1"/>
    <property type="molecule type" value="Genomic_DNA"/>
</dbReference>
<dbReference type="RefSeq" id="WP_002966883.1">
    <property type="nucleotide sequence ID" value="NZ_KN046804.1"/>
</dbReference>
<dbReference type="SMR" id="Q8FZW0"/>
<dbReference type="KEGG" id="bms:BR1360"/>
<dbReference type="KEGG" id="bsi:BS1330_I1355"/>
<dbReference type="PATRIC" id="fig|204722.21.peg.835"/>
<dbReference type="HOGENOM" id="CLU_049215_4_0_5"/>
<dbReference type="PhylomeDB" id="Q8FZW0"/>
<dbReference type="Proteomes" id="UP000007104">
    <property type="component" value="Chromosome I"/>
</dbReference>
<dbReference type="GO" id="GO:0005737">
    <property type="term" value="C:cytoplasm"/>
    <property type="evidence" value="ECO:0007669"/>
    <property type="project" value="UniProtKB-SubCell"/>
</dbReference>
<dbReference type="GO" id="GO:0016151">
    <property type="term" value="F:nickel cation binding"/>
    <property type="evidence" value="ECO:0007669"/>
    <property type="project" value="UniProtKB-UniRule"/>
</dbReference>
<dbReference type="Gene3D" id="1.10.4190.10">
    <property type="entry name" value="Urease accessory protein UreF"/>
    <property type="match status" value="1"/>
</dbReference>
<dbReference type="HAMAP" id="MF_01385">
    <property type="entry name" value="UreF"/>
    <property type="match status" value="1"/>
</dbReference>
<dbReference type="InterPro" id="IPR002639">
    <property type="entry name" value="UreF"/>
</dbReference>
<dbReference type="InterPro" id="IPR038277">
    <property type="entry name" value="UreF_sf"/>
</dbReference>
<dbReference type="PANTHER" id="PTHR33620">
    <property type="entry name" value="UREASE ACCESSORY PROTEIN F"/>
    <property type="match status" value="1"/>
</dbReference>
<dbReference type="PANTHER" id="PTHR33620:SF1">
    <property type="entry name" value="UREASE ACCESSORY PROTEIN F"/>
    <property type="match status" value="1"/>
</dbReference>
<dbReference type="Pfam" id="PF01730">
    <property type="entry name" value="UreF"/>
    <property type="match status" value="1"/>
</dbReference>
<dbReference type="PIRSF" id="PIRSF009467">
    <property type="entry name" value="Ureas_acces_UreF"/>
    <property type="match status" value="1"/>
</dbReference>
<keyword id="KW-0143">Chaperone</keyword>
<keyword id="KW-0963">Cytoplasm</keyword>
<keyword id="KW-0996">Nickel insertion</keyword>
<evidence type="ECO:0000255" key="1">
    <source>
        <dbReference type="HAMAP-Rule" id="MF_01385"/>
    </source>
</evidence>
<protein>
    <recommendedName>
        <fullName evidence="1">Urease accessory protein UreF 2</fullName>
    </recommendedName>
</protein>
<feature type="chain" id="PRO_0000344093" description="Urease accessory protein UreF 2">
    <location>
        <begin position="1"/>
        <end position="243"/>
    </location>
</feature>
<proteinExistence type="inferred from homology"/>
<name>UREF2_BRUSU</name>
<organism>
    <name type="scientific">Brucella suis biovar 1 (strain 1330)</name>
    <dbReference type="NCBI Taxonomy" id="204722"/>
    <lineage>
        <taxon>Bacteria</taxon>
        <taxon>Pseudomonadati</taxon>
        <taxon>Pseudomonadota</taxon>
        <taxon>Alphaproteobacteria</taxon>
        <taxon>Hyphomicrobiales</taxon>
        <taxon>Brucellaceae</taxon>
        <taxon>Brucella/Ochrobactrum group</taxon>
        <taxon>Brucella</taxon>
    </lineage>
</organism>
<accession>Q8FZW0</accession>
<accession>G0KB45</accession>
<comment type="function">
    <text evidence="1">Required for maturation of urease via the functional incorporation of the urease nickel metallocenter.</text>
</comment>
<comment type="function">
    <text>Disrupting the ure2 operon has no effect on urease activity, or pathogen survival in BALB/c mice when inoculated by gavage, but confers slightly enhanced resistance to low pH killing in vitro.</text>
</comment>
<comment type="subunit">
    <text evidence="1">UreD, UreF and UreG form a complex that acts as a GTP-hydrolysis-dependent molecular chaperone, activating the urease apoprotein by helping to assemble the nickel containing metallocenter of UreC. The UreE protein probably delivers the nickel.</text>
</comment>
<comment type="subcellular location">
    <subcellularLocation>
        <location evidence="1">Cytoplasm</location>
    </subcellularLocation>
</comment>
<comment type="similarity">
    <text evidence="1">Belongs to the UreF family.</text>
</comment>
<sequence>MTMRTATITEFSSSYRSLPGLLHLLQFGDSALPIGGFSFSNGLESAIQQNLVHDKETLREFTLTAMNQAATSDGIALLTAHRAARADDRGALQVIDKAVFERKLNEETRLMTVRMGRKLCELSASIIDDRLNRDWLECIKTAETPGTHPVSLGLAFAALDVDGRDAFGAQQYGVATTILGAALRLMRVSFMDTQKILLEATSTVAPAYEEIADAGIEDMASFAPMVDILAAVHVKGHVRMFMN</sequence>
<reference key="1">
    <citation type="journal article" date="2002" name="Proc. Natl. Acad. Sci. U.S.A.">
        <title>The Brucella suis genome reveals fundamental similarities between animal and plant pathogens and symbionts.</title>
        <authorList>
            <person name="Paulsen I.T."/>
            <person name="Seshadri R."/>
            <person name="Nelson K.E."/>
            <person name="Eisen J.A."/>
            <person name="Heidelberg J.F."/>
            <person name="Read T.D."/>
            <person name="Dodson R.J."/>
            <person name="Umayam L.A."/>
            <person name="Brinkac L.M."/>
            <person name="Beanan M.J."/>
            <person name="Daugherty S.C."/>
            <person name="DeBoy R.T."/>
            <person name="Durkin A.S."/>
            <person name="Kolonay J.F."/>
            <person name="Madupu R."/>
            <person name="Nelson W.C."/>
            <person name="Ayodeji B."/>
            <person name="Kraul M."/>
            <person name="Shetty J."/>
            <person name="Malek J.A."/>
            <person name="Van Aken S.E."/>
            <person name="Riedmuller S."/>
            <person name="Tettelin H."/>
            <person name="Gill S.R."/>
            <person name="White O."/>
            <person name="Salzberg S.L."/>
            <person name="Hoover D.L."/>
            <person name="Lindler L.E."/>
            <person name="Halling S.M."/>
            <person name="Boyle S.M."/>
            <person name="Fraser C.M."/>
        </authorList>
    </citation>
    <scope>NUCLEOTIDE SEQUENCE [LARGE SCALE GENOMIC DNA]</scope>
    <source>
        <strain>1330</strain>
    </source>
</reference>
<reference key="2">
    <citation type="journal article" date="2011" name="J. Bacteriol.">
        <title>Revised genome sequence of Brucella suis 1330.</title>
        <authorList>
            <person name="Tae H."/>
            <person name="Shallom S."/>
            <person name="Settlage R."/>
            <person name="Preston D."/>
            <person name="Adams L.G."/>
            <person name="Garner H.R."/>
        </authorList>
    </citation>
    <scope>NUCLEOTIDE SEQUENCE [LARGE SCALE GENOMIC DNA]</scope>
    <source>
        <strain>1330</strain>
    </source>
</reference>
<reference key="3">
    <citation type="journal article" date="2007" name="BMC Microbiol.">
        <title>Brucella suis urease encoded by ure1 but not ure2 is necessary for intestinal infection of BALB/c mice.</title>
        <authorList>
            <person name="Bandara A.B."/>
            <person name="Contreras A."/>
            <person name="Contreras-Rodriguez A."/>
            <person name="Martins A.M."/>
            <person name="Dobrean V."/>
            <person name="Poff-Reichow S."/>
            <person name="Rajasekaran P."/>
            <person name="Sriranganathan N."/>
            <person name="Schurig G.G."/>
            <person name="Boyle S.M."/>
        </authorList>
    </citation>
    <scope>OPERON DISRUPTION</scope>
    <scope>LACK OF ROLE IN VIRULENCE</scope>
    <source>
        <strain>1330</strain>
    </source>
</reference>
<gene>
    <name evidence="1" type="primary">ureF2</name>
    <name type="ordered locus">BR1360</name>
    <name type="ordered locus">BS1330_I1355</name>
</gene>